<evidence type="ECO:0000255" key="1">
    <source>
        <dbReference type="HAMAP-Rule" id="MF_00017"/>
    </source>
</evidence>
<feature type="chain" id="PRO_1000089733" description="Recombination protein RecR">
    <location>
        <begin position="1"/>
        <end position="199"/>
    </location>
</feature>
<feature type="domain" description="Toprim" evidence="1">
    <location>
        <begin position="81"/>
        <end position="176"/>
    </location>
</feature>
<feature type="zinc finger region" description="C4-type" evidence="1">
    <location>
        <begin position="58"/>
        <end position="73"/>
    </location>
</feature>
<reference key="1">
    <citation type="journal article" date="2008" name="J. Bacteriol.">
        <title>The genome of Heliobacterium modesticaldum, a phototrophic representative of the Firmicutes containing the simplest photosynthetic apparatus.</title>
        <authorList>
            <person name="Sattley W.M."/>
            <person name="Madigan M.T."/>
            <person name="Swingley W.D."/>
            <person name="Cheung P.C."/>
            <person name="Clocksin K.M."/>
            <person name="Conrad A.L."/>
            <person name="Dejesa L.C."/>
            <person name="Honchak B.M."/>
            <person name="Jung D.O."/>
            <person name="Karbach L.E."/>
            <person name="Kurdoglu A."/>
            <person name="Lahiri S."/>
            <person name="Mastrian S.D."/>
            <person name="Page L.E."/>
            <person name="Taylor H.L."/>
            <person name="Wang Z.T."/>
            <person name="Raymond J."/>
            <person name="Chen M."/>
            <person name="Blankenship R.E."/>
            <person name="Touchman J.W."/>
        </authorList>
    </citation>
    <scope>NUCLEOTIDE SEQUENCE [LARGE SCALE GENOMIC DNA]</scope>
    <source>
        <strain>ATCC 51547 / Ice1</strain>
    </source>
</reference>
<accession>B0TB20</accession>
<proteinExistence type="inferred from homology"/>
<protein>
    <recommendedName>
        <fullName evidence="1">Recombination protein RecR</fullName>
    </recommendedName>
</protein>
<gene>
    <name evidence="1" type="primary">recR</name>
    <name type="ordered locus">Helmi_11220</name>
    <name type="ORF">HM1_0809</name>
</gene>
<sequence length="199" mass="21980">MRYYAEPVGRLIEELSKLPGVGPKTAQRLAFHLLHVPRNEAVALAKAIVEAHDKTLYCSVCTNLTDRDPCRICSDANRDRAVICVVEEPRDVVAVEKTREYRGHYHVLHGALSPIEGVGPEQLRISQLMARLADPELKEVIVATNPTVEGEATAAYLARLIKPMGVKVTRIAHGLPVGGDLEYADQVTLLRAMEGRREL</sequence>
<keyword id="KW-0227">DNA damage</keyword>
<keyword id="KW-0233">DNA recombination</keyword>
<keyword id="KW-0234">DNA repair</keyword>
<keyword id="KW-0479">Metal-binding</keyword>
<keyword id="KW-1185">Reference proteome</keyword>
<keyword id="KW-0862">Zinc</keyword>
<keyword id="KW-0863">Zinc-finger</keyword>
<comment type="function">
    <text evidence="1">May play a role in DNA repair. It seems to be involved in an RecBC-independent recombinational process of DNA repair. It may act with RecF and RecO.</text>
</comment>
<comment type="similarity">
    <text evidence="1">Belongs to the RecR family.</text>
</comment>
<organism>
    <name type="scientific">Heliobacterium modesticaldum (strain ATCC 51547 / Ice1)</name>
    <dbReference type="NCBI Taxonomy" id="498761"/>
    <lineage>
        <taxon>Bacteria</taxon>
        <taxon>Bacillati</taxon>
        <taxon>Bacillota</taxon>
        <taxon>Clostridia</taxon>
        <taxon>Eubacteriales</taxon>
        <taxon>Heliobacteriaceae</taxon>
        <taxon>Heliomicrobium</taxon>
    </lineage>
</organism>
<dbReference type="EMBL" id="CP000930">
    <property type="protein sequence ID" value="ABZ83747.1"/>
    <property type="molecule type" value="Genomic_DNA"/>
</dbReference>
<dbReference type="RefSeq" id="WP_012282270.1">
    <property type="nucleotide sequence ID" value="NC_010337.2"/>
</dbReference>
<dbReference type="SMR" id="B0TB20"/>
<dbReference type="STRING" id="498761.HM1_0809"/>
<dbReference type="KEGG" id="hmo:HM1_0809"/>
<dbReference type="eggNOG" id="COG0353">
    <property type="taxonomic scope" value="Bacteria"/>
</dbReference>
<dbReference type="HOGENOM" id="CLU_060739_1_0_9"/>
<dbReference type="OrthoDB" id="9802672at2"/>
<dbReference type="Proteomes" id="UP000008550">
    <property type="component" value="Chromosome"/>
</dbReference>
<dbReference type="GO" id="GO:0003677">
    <property type="term" value="F:DNA binding"/>
    <property type="evidence" value="ECO:0007669"/>
    <property type="project" value="UniProtKB-UniRule"/>
</dbReference>
<dbReference type="GO" id="GO:0008270">
    <property type="term" value="F:zinc ion binding"/>
    <property type="evidence" value="ECO:0007669"/>
    <property type="project" value="UniProtKB-KW"/>
</dbReference>
<dbReference type="GO" id="GO:0006310">
    <property type="term" value="P:DNA recombination"/>
    <property type="evidence" value="ECO:0007669"/>
    <property type="project" value="UniProtKB-UniRule"/>
</dbReference>
<dbReference type="GO" id="GO:0006281">
    <property type="term" value="P:DNA repair"/>
    <property type="evidence" value="ECO:0007669"/>
    <property type="project" value="UniProtKB-UniRule"/>
</dbReference>
<dbReference type="CDD" id="cd01025">
    <property type="entry name" value="TOPRIM_recR"/>
    <property type="match status" value="1"/>
</dbReference>
<dbReference type="Gene3D" id="3.30.60.80">
    <property type="match status" value="1"/>
</dbReference>
<dbReference type="Gene3D" id="3.40.1360.10">
    <property type="match status" value="1"/>
</dbReference>
<dbReference type="Gene3D" id="6.10.250.240">
    <property type="match status" value="1"/>
</dbReference>
<dbReference type="Gene3D" id="1.10.8.420">
    <property type="entry name" value="RecR Domain 1"/>
    <property type="match status" value="1"/>
</dbReference>
<dbReference type="HAMAP" id="MF_00017">
    <property type="entry name" value="RecR"/>
    <property type="match status" value="1"/>
</dbReference>
<dbReference type="InterPro" id="IPR000093">
    <property type="entry name" value="DNA_Rcmb_RecR"/>
</dbReference>
<dbReference type="InterPro" id="IPR003583">
    <property type="entry name" value="Hlx-hairpin-Hlx_DNA-bd_motif"/>
</dbReference>
<dbReference type="InterPro" id="IPR023627">
    <property type="entry name" value="Rcmb_RecR"/>
</dbReference>
<dbReference type="InterPro" id="IPR015967">
    <property type="entry name" value="Rcmb_RecR_Znf"/>
</dbReference>
<dbReference type="InterPro" id="IPR006171">
    <property type="entry name" value="TOPRIM_dom"/>
</dbReference>
<dbReference type="InterPro" id="IPR034137">
    <property type="entry name" value="TOPRIM_RecR"/>
</dbReference>
<dbReference type="NCBIfam" id="TIGR00615">
    <property type="entry name" value="recR"/>
    <property type="match status" value="1"/>
</dbReference>
<dbReference type="PANTHER" id="PTHR30446">
    <property type="entry name" value="RECOMBINATION PROTEIN RECR"/>
    <property type="match status" value="1"/>
</dbReference>
<dbReference type="PANTHER" id="PTHR30446:SF0">
    <property type="entry name" value="RECOMBINATION PROTEIN RECR"/>
    <property type="match status" value="1"/>
</dbReference>
<dbReference type="Pfam" id="PF21175">
    <property type="entry name" value="RecR_C"/>
    <property type="match status" value="1"/>
</dbReference>
<dbReference type="Pfam" id="PF21176">
    <property type="entry name" value="RecR_HhH"/>
    <property type="match status" value="1"/>
</dbReference>
<dbReference type="Pfam" id="PF02132">
    <property type="entry name" value="RecR_ZnF"/>
    <property type="match status" value="1"/>
</dbReference>
<dbReference type="Pfam" id="PF13662">
    <property type="entry name" value="Toprim_4"/>
    <property type="match status" value="1"/>
</dbReference>
<dbReference type="SMART" id="SM00278">
    <property type="entry name" value="HhH1"/>
    <property type="match status" value="1"/>
</dbReference>
<dbReference type="SMART" id="SM00493">
    <property type="entry name" value="TOPRIM"/>
    <property type="match status" value="1"/>
</dbReference>
<dbReference type="SUPFAM" id="SSF111304">
    <property type="entry name" value="Recombination protein RecR"/>
    <property type="match status" value="1"/>
</dbReference>
<dbReference type="PROSITE" id="PS01300">
    <property type="entry name" value="RECR"/>
    <property type="match status" value="1"/>
</dbReference>
<dbReference type="PROSITE" id="PS50880">
    <property type="entry name" value="TOPRIM"/>
    <property type="match status" value="1"/>
</dbReference>
<name>RECR_HELMI</name>